<organism>
    <name type="scientific">Arabidopsis thaliana</name>
    <name type="common">Mouse-ear cress</name>
    <dbReference type="NCBI Taxonomy" id="3702"/>
    <lineage>
        <taxon>Eukaryota</taxon>
        <taxon>Viridiplantae</taxon>
        <taxon>Streptophyta</taxon>
        <taxon>Embryophyta</taxon>
        <taxon>Tracheophyta</taxon>
        <taxon>Spermatophyta</taxon>
        <taxon>Magnoliopsida</taxon>
        <taxon>eudicotyledons</taxon>
        <taxon>Gunneridae</taxon>
        <taxon>Pentapetalae</taxon>
        <taxon>rosids</taxon>
        <taxon>malvids</taxon>
        <taxon>Brassicales</taxon>
        <taxon>Brassicaceae</taxon>
        <taxon>Camelineae</taxon>
        <taxon>Arabidopsis</taxon>
    </lineage>
</organism>
<sequence>MEDIIIGVVALAAVLLFFLYQKPKTKRYKLPPGPSPLPVIGNLLQLQKLNPQRFFAGWAKKYGPILSYRIGSRTMVVISSAELAKELLKTQDVNFADRPPHRGHEFISYGRRDMALNHYTPYYREIRKMGMNHLFSPTRVATFKHVREEEARRMMDKINKAADKSEVVDISELMLTFTNSVVCRQAFGKKYNEDGEEMKRFIKILYGTQSVLGKIFFSDFFPYCGFLDDLSGLTAYMKECFERQDTYIQEVVNETLDPKRVKPETESMIDLLMGIYKEQPFASEFTVDNVKAVILDIVVAGTDTAAAAVVWGMTYLMKYPQVLKKAQAEVREYMKEKGSTFVTEDDVKNLPYFRALVKETLRIEPVIPLLIPRACIQDTKIAGYDIPAGTTVNVNAWAVSRDEKEWGPNPDEFRPERFLEKEVDFKGTDYEFIPFGSGRRMCPGMRLGAAMLEVPYANLLLSFNFKLPNGMKPDDINMDVMTGLAMHKSQHLKLVPEKVNKY</sequence>
<name>C83A1_ARATH</name>
<reference key="1">
    <citation type="journal article" date="1995" name="Plant Physiol.">
        <title>A cDNA encoding a novel cytochrome P450-dependent monooxygenase from Arabidopsis thaliana.</title>
        <authorList>
            <person name="Chapple C.C.S."/>
        </authorList>
    </citation>
    <scope>NUCLEOTIDE SEQUENCE [MRNA]</scope>
    <source>
        <strain>cv. Columbia</strain>
    </source>
</reference>
<reference key="2">
    <citation type="journal article" date="1998" name="Plant Mol. Biol.">
        <title>Cytochrome P450 superfamily in Arabidopsis thaliana: isolation of cDNAs, differential expression, and RFLP mapping of multiple cytochromes P450.</title>
        <authorList>
            <person name="Mizutani M."/>
            <person name="Ward E."/>
            <person name="Ohta D."/>
        </authorList>
    </citation>
    <scope>NUCLEOTIDE SEQUENCE [MRNA]</scope>
    <source>
        <strain>cv. Columbia</strain>
        <tissue>Seedling</tissue>
    </source>
</reference>
<reference key="3">
    <citation type="submission" date="1996-09" db="EMBL/GenBank/DDBJ databases">
        <title>Molecular cloning and characterisation of a vernalisation-induced cytochrome P450 gene from Arabidopsis thaliana.</title>
        <authorList>
            <person name="Bilodeau P."/>
            <person name="Udvardi M.K."/>
            <person name="Peacock W.J."/>
            <person name="Dennis E.S."/>
        </authorList>
    </citation>
    <scope>NUCLEOTIDE SEQUENCE [GENOMIC DNA]</scope>
    <source>
        <strain>cv. C24</strain>
    </source>
</reference>
<reference key="4">
    <citation type="journal article" date="1999" name="Nature">
        <title>Sequence and analysis of chromosome 4 of the plant Arabidopsis thaliana.</title>
        <authorList>
            <person name="Mayer K.F.X."/>
            <person name="Schueller C."/>
            <person name="Wambutt R."/>
            <person name="Murphy G."/>
            <person name="Volckaert G."/>
            <person name="Pohl T."/>
            <person name="Duesterhoeft A."/>
            <person name="Stiekema W."/>
            <person name="Entian K.-D."/>
            <person name="Terryn N."/>
            <person name="Harris B."/>
            <person name="Ansorge W."/>
            <person name="Brandt P."/>
            <person name="Grivell L.A."/>
            <person name="Rieger M."/>
            <person name="Weichselgartner M."/>
            <person name="de Simone V."/>
            <person name="Obermaier B."/>
            <person name="Mache R."/>
            <person name="Mueller M."/>
            <person name="Kreis M."/>
            <person name="Delseny M."/>
            <person name="Puigdomenech P."/>
            <person name="Watson M."/>
            <person name="Schmidtheini T."/>
            <person name="Reichert B."/>
            <person name="Portetelle D."/>
            <person name="Perez-Alonso M."/>
            <person name="Boutry M."/>
            <person name="Bancroft I."/>
            <person name="Vos P."/>
            <person name="Hoheisel J."/>
            <person name="Zimmermann W."/>
            <person name="Wedler H."/>
            <person name="Ridley P."/>
            <person name="Langham S.-A."/>
            <person name="McCullagh B."/>
            <person name="Bilham L."/>
            <person name="Robben J."/>
            <person name="van der Schueren J."/>
            <person name="Grymonprez B."/>
            <person name="Chuang Y.-J."/>
            <person name="Vandenbussche F."/>
            <person name="Braeken M."/>
            <person name="Weltjens I."/>
            <person name="Voet M."/>
            <person name="Bastiaens I."/>
            <person name="Aert R."/>
            <person name="Defoor E."/>
            <person name="Weitzenegger T."/>
            <person name="Bothe G."/>
            <person name="Ramsperger U."/>
            <person name="Hilbert H."/>
            <person name="Braun M."/>
            <person name="Holzer E."/>
            <person name="Brandt A."/>
            <person name="Peters S."/>
            <person name="van Staveren M."/>
            <person name="Dirkse W."/>
            <person name="Mooijman P."/>
            <person name="Klein Lankhorst R."/>
            <person name="Rose M."/>
            <person name="Hauf J."/>
            <person name="Koetter P."/>
            <person name="Berneiser S."/>
            <person name="Hempel S."/>
            <person name="Feldpausch M."/>
            <person name="Lamberth S."/>
            <person name="Van den Daele H."/>
            <person name="De Keyser A."/>
            <person name="Buysshaert C."/>
            <person name="Gielen J."/>
            <person name="Villarroel R."/>
            <person name="De Clercq R."/>
            <person name="van Montagu M."/>
            <person name="Rogers J."/>
            <person name="Cronin A."/>
            <person name="Quail M.A."/>
            <person name="Bray-Allen S."/>
            <person name="Clark L."/>
            <person name="Doggett J."/>
            <person name="Hall S."/>
            <person name="Kay M."/>
            <person name="Lennard N."/>
            <person name="McLay K."/>
            <person name="Mayes R."/>
            <person name="Pettett A."/>
            <person name="Rajandream M.A."/>
            <person name="Lyne M."/>
            <person name="Benes V."/>
            <person name="Rechmann S."/>
            <person name="Borkova D."/>
            <person name="Bloecker H."/>
            <person name="Scharfe M."/>
            <person name="Grimm M."/>
            <person name="Loehnert T.-H."/>
            <person name="Dose S."/>
            <person name="de Haan M."/>
            <person name="Maarse A.C."/>
            <person name="Schaefer M."/>
            <person name="Mueller-Auer S."/>
            <person name="Gabel C."/>
            <person name="Fuchs M."/>
            <person name="Fartmann B."/>
            <person name="Granderath K."/>
            <person name="Dauner D."/>
            <person name="Herzl A."/>
            <person name="Neumann S."/>
            <person name="Argiriou A."/>
            <person name="Vitale D."/>
            <person name="Liguori R."/>
            <person name="Piravandi E."/>
            <person name="Massenet O."/>
            <person name="Quigley F."/>
            <person name="Clabauld G."/>
            <person name="Muendlein A."/>
            <person name="Felber R."/>
            <person name="Schnabl S."/>
            <person name="Hiller R."/>
            <person name="Schmidt W."/>
            <person name="Lecharny A."/>
            <person name="Aubourg S."/>
            <person name="Chefdor F."/>
            <person name="Cooke R."/>
            <person name="Berger C."/>
            <person name="Monfort A."/>
            <person name="Casacuberta E."/>
            <person name="Gibbons T."/>
            <person name="Weber N."/>
            <person name="Vandenbol M."/>
            <person name="Bargues M."/>
            <person name="Terol J."/>
            <person name="Torres A."/>
            <person name="Perez-Perez A."/>
            <person name="Purnelle B."/>
            <person name="Bent E."/>
            <person name="Johnson S."/>
            <person name="Tacon D."/>
            <person name="Jesse T."/>
            <person name="Heijnen L."/>
            <person name="Schwarz S."/>
            <person name="Scholler P."/>
            <person name="Heber S."/>
            <person name="Francs P."/>
            <person name="Bielke C."/>
            <person name="Frishman D."/>
            <person name="Haase D."/>
            <person name="Lemcke K."/>
            <person name="Mewes H.-W."/>
            <person name="Stocker S."/>
            <person name="Zaccaria P."/>
            <person name="Bevan M."/>
            <person name="Wilson R.K."/>
            <person name="de la Bastide M."/>
            <person name="Habermann K."/>
            <person name="Parnell L."/>
            <person name="Dedhia N."/>
            <person name="Gnoj L."/>
            <person name="Schutz K."/>
            <person name="Huang E."/>
            <person name="Spiegel L."/>
            <person name="Sekhon M."/>
            <person name="Murray J."/>
            <person name="Sheet P."/>
            <person name="Cordes M."/>
            <person name="Abu-Threideh J."/>
            <person name="Stoneking T."/>
            <person name="Kalicki J."/>
            <person name="Graves T."/>
            <person name="Harmon G."/>
            <person name="Edwards J."/>
            <person name="Latreille P."/>
            <person name="Courtney L."/>
            <person name="Cloud J."/>
            <person name="Abbott A."/>
            <person name="Scott K."/>
            <person name="Johnson D."/>
            <person name="Minx P."/>
            <person name="Bentley D."/>
            <person name="Fulton B."/>
            <person name="Miller N."/>
            <person name="Greco T."/>
            <person name="Kemp K."/>
            <person name="Kramer J."/>
            <person name="Fulton L."/>
            <person name="Mardis E."/>
            <person name="Dante M."/>
            <person name="Pepin K."/>
            <person name="Hillier L.W."/>
            <person name="Nelson J."/>
            <person name="Spieth J."/>
            <person name="Ryan E."/>
            <person name="Andrews S."/>
            <person name="Geisel C."/>
            <person name="Layman D."/>
            <person name="Du H."/>
            <person name="Ali J."/>
            <person name="Berghoff A."/>
            <person name="Jones K."/>
            <person name="Drone K."/>
            <person name="Cotton M."/>
            <person name="Joshu C."/>
            <person name="Antonoiu B."/>
            <person name="Zidanic M."/>
            <person name="Strong C."/>
            <person name="Sun H."/>
            <person name="Lamar B."/>
            <person name="Yordan C."/>
            <person name="Ma P."/>
            <person name="Zhong J."/>
            <person name="Preston R."/>
            <person name="Vil D."/>
            <person name="Shekher M."/>
            <person name="Matero A."/>
            <person name="Shah R."/>
            <person name="Swaby I.K."/>
            <person name="O'Shaughnessy A."/>
            <person name="Rodriguez M."/>
            <person name="Hoffman J."/>
            <person name="Till S."/>
            <person name="Granat S."/>
            <person name="Shohdy N."/>
            <person name="Hasegawa A."/>
            <person name="Hameed A."/>
            <person name="Lodhi M."/>
            <person name="Johnson A."/>
            <person name="Chen E."/>
            <person name="Marra M.A."/>
            <person name="Martienssen R."/>
            <person name="McCombie W.R."/>
        </authorList>
    </citation>
    <scope>NUCLEOTIDE SEQUENCE [LARGE SCALE GENOMIC DNA]</scope>
    <source>
        <strain>cv. Columbia</strain>
    </source>
</reference>
<reference key="5">
    <citation type="journal article" date="2017" name="Plant J.">
        <title>Araport11: a complete reannotation of the Arabidopsis thaliana reference genome.</title>
        <authorList>
            <person name="Cheng C.Y."/>
            <person name="Krishnakumar V."/>
            <person name="Chan A.P."/>
            <person name="Thibaud-Nissen F."/>
            <person name="Schobel S."/>
            <person name="Town C.D."/>
        </authorList>
    </citation>
    <scope>GENOME REANNOTATION</scope>
    <source>
        <strain>cv. Columbia</strain>
    </source>
</reference>
<reference key="6">
    <citation type="journal article" date="2003" name="Science">
        <title>Empirical analysis of transcriptional activity in the Arabidopsis genome.</title>
        <authorList>
            <person name="Yamada K."/>
            <person name="Lim J."/>
            <person name="Dale J.M."/>
            <person name="Chen H."/>
            <person name="Shinn P."/>
            <person name="Palm C.J."/>
            <person name="Southwick A.M."/>
            <person name="Wu H.C."/>
            <person name="Kim C.J."/>
            <person name="Nguyen M."/>
            <person name="Pham P.K."/>
            <person name="Cheuk R.F."/>
            <person name="Karlin-Newmann G."/>
            <person name="Liu S.X."/>
            <person name="Lam B."/>
            <person name="Sakano H."/>
            <person name="Wu T."/>
            <person name="Yu G."/>
            <person name="Miranda M."/>
            <person name="Quach H.L."/>
            <person name="Tripp M."/>
            <person name="Chang C.H."/>
            <person name="Lee J.M."/>
            <person name="Toriumi M.J."/>
            <person name="Chan M.M."/>
            <person name="Tang C.C."/>
            <person name="Onodera C.S."/>
            <person name="Deng J.M."/>
            <person name="Akiyama K."/>
            <person name="Ansari Y."/>
            <person name="Arakawa T."/>
            <person name="Banh J."/>
            <person name="Banno F."/>
            <person name="Bowser L."/>
            <person name="Brooks S.Y."/>
            <person name="Carninci P."/>
            <person name="Chao Q."/>
            <person name="Choy N."/>
            <person name="Enju A."/>
            <person name="Goldsmith A.D."/>
            <person name="Gurjal M."/>
            <person name="Hansen N.F."/>
            <person name="Hayashizaki Y."/>
            <person name="Johnson-Hopson C."/>
            <person name="Hsuan V.W."/>
            <person name="Iida K."/>
            <person name="Karnes M."/>
            <person name="Khan S."/>
            <person name="Koesema E."/>
            <person name="Ishida J."/>
            <person name="Jiang P.X."/>
            <person name="Jones T."/>
            <person name="Kawai J."/>
            <person name="Kamiya A."/>
            <person name="Meyers C."/>
            <person name="Nakajima M."/>
            <person name="Narusaka M."/>
            <person name="Seki M."/>
            <person name="Sakurai T."/>
            <person name="Satou M."/>
            <person name="Tamse R."/>
            <person name="Vaysberg M."/>
            <person name="Wallender E.K."/>
            <person name="Wong C."/>
            <person name="Yamamura Y."/>
            <person name="Yuan S."/>
            <person name="Shinozaki K."/>
            <person name="Davis R.W."/>
            <person name="Theologis A."/>
            <person name="Ecker J.R."/>
        </authorList>
    </citation>
    <scope>NUCLEOTIDE SEQUENCE [LARGE SCALE MRNA]</scope>
    <source>
        <strain>cv. Columbia</strain>
    </source>
</reference>
<reference key="7">
    <citation type="journal article" date="2003" name="Plant Cell">
        <title>The Arabidopsis ref2 mutant is defective in the gene encoding CYP83A1 and shows both phenylpropanoid and glucosinolate phenotypes.</title>
        <authorList>
            <person name="Hemm M.R."/>
            <person name="Ruegger M.O."/>
            <person name="Chapple C."/>
        </authorList>
    </citation>
    <scope>FUNCTION</scope>
    <scope>DISRUPTION PHENOTYPE</scope>
</reference>
<reference key="8">
    <citation type="journal article" date="2003" name="Plant Physiol.">
        <title>CYP83A1 and CYP83B1, two nonredundant cytochrome P450 enzymes metabolizing oximes in the biosynthesis of glucosinolates in Arabidopsis.</title>
        <authorList>
            <person name="Naur P."/>
            <person name="Petersen B.L."/>
            <person name="Mikkelsen M.D."/>
            <person name="Bak S."/>
            <person name="Rasmussen H."/>
            <person name="Olsen C.E."/>
            <person name="Halkier B.A."/>
        </authorList>
    </citation>
    <scope>FUNCTION</scope>
    <scope>CATALYTIC ACTIVITY</scope>
    <scope>BIOPHYSICOCHEMICAL PROPERTIES</scope>
</reference>
<feature type="chain" id="PRO_0000052166" description="Cytochrome P450 83A1">
    <location>
        <begin position="1"/>
        <end position="502"/>
    </location>
</feature>
<feature type="transmembrane region" description="Helical" evidence="2">
    <location>
        <begin position="1"/>
        <end position="21"/>
    </location>
</feature>
<feature type="binding site" description="axial binding residue" evidence="1">
    <location>
        <position position="442"/>
    </location>
    <ligand>
        <name>heme</name>
        <dbReference type="ChEBI" id="CHEBI:30413"/>
    </ligand>
    <ligandPart>
        <name>Fe</name>
        <dbReference type="ChEBI" id="CHEBI:18248"/>
    </ligandPart>
</feature>
<feature type="sequence conflict" description="In Ref. 1; AAA79982." evidence="6" ref="1">
    <original>K</original>
    <variation>T</variation>
    <location>
        <position position="277"/>
    </location>
</feature>
<keyword id="KW-0256">Endoplasmic reticulum</keyword>
<keyword id="KW-0349">Heme</keyword>
<keyword id="KW-0408">Iron</keyword>
<keyword id="KW-0472">Membrane</keyword>
<keyword id="KW-0479">Metal-binding</keyword>
<keyword id="KW-0503">Monooxygenase</keyword>
<keyword id="KW-0560">Oxidoreductase</keyword>
<keyword id="KW-1185">Reference proteome</keyword>
<keyword id="KW-0812">Transmembrane</keyword>
<keyword id="KW-1133">Transmembrane helix</keyword>
<dbReference type="EC" id="1.14.14.43" evidence="4"/>
<dbReference type="EMBL" id="U18929">
    <property type="protein sequence ID" value="AAA79982.1"/>
    <property type="molecule type" value="mRNA"/>
</dbReference>
<dbReference type="EMBL" id="D78599">
    <property type="protein sequence ID" value="BAA28532.1"/>
    <property type="molecule type" value="mRNA"/>
</dbReference>
<dbReference type="EMBL" id="U69134">
    <property type="protein sequence ID" value="AAB71623.1"/>
    <property type="molecule type" value="Genomic_DNA"/>
</dbReference>
<dbReference type="EMBL" id="AL035528">
    <property type="protein sequence ID" value="CAB36841.1"/>
    <property type="molecule type" value="Genomic_DNA"/>
</dbReference>
<dbReference type="EMBL" id="AL161537">
    <property type="protein sequence ID" value="CAB78419.1"/>
    <property type="molecule type" value="Genomic_DNA"/>
</dbReference>
<dbReference type="EMBL" id="CP002687">
    <property type="protein sequence ID" value="AEE83323.1"/>
    <property type="molecule type" value="Genomic_DNA"/>
</dbReference>
<dbReference type="EMBL" id="AF428469">
    <property type="protein sequence ID" value="AAL16238.1"/>
    <property type="molecule type" value="mRNA"/>
</dbReference>
<dbReference type="EMBL" id="AY075697">
    <property type="protein sequence ID" value="AAL77703.1"/>
    <property type="molecule type" value="mRNA"/>
</dbReference>
<dbReference type="EMBL" id="AY102146">
    <property type="protein sequence ID" value="AAM26713.1"/>
    <property type="molecule type" value="mRNA"/>
</dbReference>
<dbReference type="PIR" id="T05246">
    <property type="entry name" value="T05246"/>
</dbReference>
<dbReference type="RefSeq" id="NP_193113.1">
    <property type="nucleotide sequence ID" value="NM_117451.4"/>
</dbReference>
<dbReference type="SMR" id="P48421"/>
<dbReference type="BioGRID" id="12308">
    <property type="interactions" value="16"/>
</dbReference>
<dbReference type="FunCoup" id="P48421">
    <property type="interactions" value="322"/>
</dbReference>
<dbReference type="IntAct" id="P48421">
    <property type="interactions" value="13"/>
</dbReference>
<dbReference type="STRING" id="3702.P48421"/>
<dbReference type="PaxDb" id="3702-AT4G13770.1"/>
<dbReference type="ProteomicsDB" id="240583"/>
<dbReference type="EnsemblPlants" id="AT4G13770.1">
    <property type="protein sequence ID" value="AT4G13770.1"/>
    <property type="gene ID" value="AT4G13770"/>
</dbReference>
<dbReference type="GeneID" id="827011"/>
<dbReference type="Gramene" id="AT4G13770.1">
    <property type="protein sequence ID" value="AT4G13770.1"/>
    <property type="gene ID" value="AT4G13770"/>
</dbReference>
<dbReference type="KEGG" id="ath:AT4G13770"/>
<dbReference type="Araport" id="AT4G13770"/>
<dbReference type="TAIR" id="AT4G13770">
    <property type="gene designation" value="CYP83A1"/>
</dbReference>
<dbReference type="eggNOG" id="KOG0156">
    <property type="taxonomic scope" value="Eukaryota"/>
</dbReference>
<dbReference type="HOGENOM" id="CLU_001570_4_1_1"/>
<dbReference type="InParanoid" id="P48421"/>
<dbReference type="OMA" id="QRKWAHA"/>
<dbReference type="OrthoDB" id="639466at2759"/>
<dbReference type="PhylomeDB" id="P48421"/>
<dbReference type="BioCyc" id="ARA:AT4G13770-MONOMER"/>
<dbReference type="BioCyc" id="MetaCyc:AT4G13770-MONOMER"/>
<dbReference type="BRENDA" id="1.14.14.43">
    <property type="organism ID" value="399"/>
</dbReference>
<dbReference type="SABIO-RK" id="P48421"/>
<dbReference type="PRO" id="PR:P48421"/>
<dbReference type="Proteomes" id="UP000006548">
    <property type="component" value="Chromosome 4"/>
</dbReference>
<dbReference type="ExpressionAtlas" id="P48421">
    <property type="expression patterns" value="baseline and differential"/>
</dbReference>
<dbReference type="GO" id="GO:0005829">
    <property type="term" value="C:cytosol"/>
    <property type="evidence" value="ECO:0007005"/>
    <property type="project" value="TAIR"/>
</dbReference>
<dbReference type="GO" id="GO:0005789">
    <property type="term" value="C:endoplasmic reticulum membrane"/>
    <property type="evidence" value="ECO:0007669"/>
    <property type="project" value="UniProtKB-SubCell"/>
</dbReference>
<dbReference type="GO" id="GO:0020037">
    <property type="term" value="F:heme binding"/>
    <property type="evidence" value="ECO:0007669"/>
    <property type="project" value="InterPro"/>
</dbReference>
<dbReference type="GO" id="GO:0005506">
    <property type="term" value="F:iron ion binding"/>
    <property type="evidence" value="ECO:0007669"/>
    <property type="project" value="InterPro"/>
</dbReference>
<dbReference type="GO" id="GO:0016709">
    <property type="term" value="F:oxidoreductase activity, acting on paired donors, with incorporation or reduction of molecular oxygen, NAD(P)H as one donor, and incorporation of one atom of oxygen"/>
    <property type="evidence" value="ECO:0000314"/>
    <property type="project" value="TAIR"/>
</dbReference>
<dbReference type="GO" id="GO:0019761">
    <property type="term" value="P:glucosinolate biosynthetic process"/>
    <property type="evidence" value="ECO:0000314"/>
    <property type="project" value="TAIR"/>
</dbReference>
<dbReference type="GO" id="GO:0009625">
    <property type="term" value="P:response to insect"/>
    <property type="evidence" value="ECO:0000270"/>
    <property type="project" value="TAIR"/>
</dbReference>
<dbReference type="CDD" id="cd11072">
    <property type="entry name" value="CYP71-like"/>
    <property type="match status" value="1"/>
</dbReference>
<dbReference type="FunFam" id="1.10.630.10:FF:000011">
    <property type="entry name" value="Cytochrome P450 83B1"/>
    <property type="match status" value="1"/>
</dbReference>
<dbReference type="Gene3D" id="1.10.630.10">
    <property type="entry name" value="Cytochrome P450"/>
    <property type="match status" value="1"/>
</dbReference>
<dbReference type="InterPro" id="IPR001128">
    <property type="entry name" value="Cyt_P450"/>
</dbReference>
<dbReference type="InterPro" id="IPR017972">
    <property type="entry name" value="Cyt_P450_CS"/>
</dbReference>
<dbReference type="InterPro" id="IPR002401">
    <property type="entry name" value="Cyt_P450_E_grp-I"/>
</dbReference>
<dbReference type="InterPro" id="IPR036396">
    <property type="entry name" value="Cyt_P450_sf"/>
</dbReference>
<dbReference type="PANTHER" id="PTHR47955:SF22">
    <property type="entry name" value="CYTOCHROME P450 83B1-LIKE"/>
    <property type="match status" value="1"/>
</dbReference>
<dbReference type="PANTHER" id="PTHR47955">
    <property type="entry name" value="CYTOCHROME P450 FAMILY 71 PROTEIN"/>
    <property type="match status" value="1"/>
</dbReference>
<dbReference type="Pfam" id="PF00067">
    <property type="entry name" value="p450"/>
    <property type="match status" value="1"/>
</dbReference>
<dbReference type="PRINTS" id="PR00463">
    <property type="entry name" value="EP450I"/>
</dbReference>
<dbReference type="PRINTS" id="PR00385">
    <property type="entry name" value="P450"/>
</dbReference>
<dbReference type="SUPFAM" id="SSF48264">
    <property type="entry name" value="Cytochrome P450"/>
    <property type="match status" value="1"/>
</dbReference>
<dbReference type="PROSITE" id="PS00086">
    <property type="entry name" value="CYTOCHROME_P450"/>
    <property type="match status" value="1"/>
</dbReference>
<proteinExistence type="evidence at protein level"/>
<accession>P48421</accession>
<accession>O24429</accession>
<evidence type="ECO:0000250" key="1">
    <source>
        <dbReference type="UniProtKB" id="Q96242"/>
    </source>
</evidence>
<evidence type="ECO:0000255" key="2"/>
<evidence type="ECO:0000269" key="3">
    <source>
    </source>
</evidence>
<evidence type="ECO:0000269" key="4">
    <source>
    </source>
</evidence>
<evidence type="ECO:0000303" key="5">
    <source>
    </source>
</evidence>
<evidence type="ECO:0000305" key="6"/>
<gene>
    <name type="primary">CYP83A1</name>
    <name type="synonym">CYP83</name>
    <name evidence="5" type="synonym">REF2</name>
    <name type="ordered locus">At4g13770</name>
    <name type="ORF">F18A5.160</name>
</gene>
<comment type="function">
    <text evidence="3 4">Involved in the metabolism of aliphatic and aromatic oximes (PubMed:12970475). Involved in the biosynthesis of both short-chain and long-chain aliphatic glucosinolates (PubMed:12509530).</text>
</comment>
<comment type="catalytic activity">
    <reaction evidence="4">
        <text>an (E)-omega-(methylsulfanyl)-alkanal oxime + glutathione + reduced [NADPH--hemoprotein reductase] + O2 = an S-[(1E)-1-(hydroxyimino)-omega-(methylsulfanyl)alkyl]-L-glutathione + oxidized [NADPH--hemoprotein reductase] + 2 H2O + H(+)</text>
        <dbReference type="Rhea" id="RHEA:51992"/>
        <dbReference type="Rhea" id="RHEA-COMP:11964"/>
        <dbReference type="Rhea" id="RHEA-COMP:11965"/>
        <dbReference type="Rhea" id="RHEA-COMP:13114"/>
        <dbReference type="Rhea" id="RHEA-COMP:13138"/>
        <dbReference type="ChEBI" id="CHEBI:15377"/>
        <dbReference type="ChEBI" id="CHEBI:15378"/>
        <dbReference type="ChEBI" id="CHEBI:15379"/>
        <dbReference type="ChEBI" id="CHEBI:57618"/>
        <dbReference type="ChEBI" id="CHEBI:57925"/>
        <dbReference type="ChEBI" id="CHEBI:58210"/>
        <dbReference type="ChEBI" id="CHEBI:134680"/>
        <dbReference type="ChEBI" id="CHEBI:136061"/>
        <dbReference type="EC" id="1.14.14.43"/>
    </reaction>
</comment>
<comment type="cofactor">
    <cofactor evidence="1">
        <name>heme</name>
        <dbReference type="ChEBI" id="CHEBI:30413"/>
    </cofactor>
</comment>
<comment type="biophysicochemical properties">
    <kinetics>
        <KM evidence="4">150 uM for indole-3-acetaldoxime</KM>
        <KM evidence="4">156 uM for p-hydroxyphenylacetaldoxime</KM>
        <KM evidence="4">556 uM for phenylacetaldoxime</KM>
        <text evidence="4">kcat is 140 min(-1) with indole-3-acetaldoxime as substrate. kcat is 26 min(-1) with p-hydroxyphenylacetaldoxime as substrate. kcat is 25 min(-1) with phenylacetaldoxime as substrate.</text>
    </kinetics>
</comment>
<comment type="subcellular location">
    <subcellularLocation>
        <location evidence="6">Endoplasmic reticulum membrane</location>
        <topology evidence="6">Single-pass membrane protein</topology>
    </subcellularLocation>
</comment>
<comment type="disruption phenotype">
    <text>Reduced levels of all aliphatic glucosinolates and increased levels of indole-derived glucosinolates in leaves.</text>
</comment>
<comment type="similarity">
    <text evidence="6">Belongs to the cytochrome P450 family.</text>
</comment>
<protein>
    <recommendedName>
        <fullName>Cytochrome P450 83A1</fullName>
        <ecNumber evidence="4">1.14.14.43</ecNumber>
    </recommendedName>
    <alternativeName>
        <fullName>CYPLXXXIII</fullName>
    </alternativeName>
    <alternativeName>
        <fullName evidence="5">Protein REDUCED EPIDERMAL FLUORESCENCE 2</fullName>
    </alternativeName>
</protein>